<comment type="similarity">
    <text evidence="1">Belongs to the universal ribosomal protein uS9 family.</text>
</comment>
<gene>
    <name evidence="1" type="primary">rpsI</name>
    <name type="ordered locus">OEOE_0629</name>
</gene>
<protein>
    <recommendedName>
        <fullName evidence="1">Small ribosomal subunit protein uS9</fullName>
    </recommendedName>
    <alternativeName>
        <fullName evidence="3">30S ribosomal protein S9</fullName>
    </alternativeName>
</protein>
<evidence type="ECO:0000255" key="1">
    <source>
        <dbReference type="HAMAP-Rule" id="MF_00532"/>
    </source>
</evidence>
<evidence type="ECO:0000256" key="2">
    <source>
        <dbReference type="SAM" id="MobiDB-lite"/>
    </source>
</evidence>
<evidence type="ECO:0000305" key="3"/>
<proteinExistence type="inferred from homology"/>
<sequence>MANTQYAGTGRRKVSVARVRLTPGSGKITINNRSFEEYIPAANLRAVVIQPFAVTSTDGTYDVNVNVVGGGFAGQAGATRHGIARALLQVDPDFRPALKSAGLLTRDSRMVERKKPGLKKARRASQFSKR</sequence>
<feature type="chain" id="PRO_1000051275" description="Small ribosomal subunit protein uS9">
    <location>
        <begin position="1"/>
        <end position="130"/>
    </location>
</feature>
<feature type="region of interest" description="Disordered" evidence="2">
    <location>
        <begin position="105"/>
        <end position="130"/>
    </location>
</feature>
<feature type="compositionally biased region" description="Basic and acidic residues" evidence="2">
    <location>
        <begin position="106"/>
        <end position="115"/>
    </location>
</feature>
<feature type="compositionally biased region" description="Basic residues" evidence="2">
    <location>
        <begin position="116"/>
        <end position="130"/>
    </location>
</feature>
<keyword id="KW-1185">Reference proteome</keyword>
<keyword id="KW-0687">Ribonucleoprotein</keyword>
<keyword id="KW-0689">Ribosomal protein</keyword>
<organism>
    <name type="scientific">Oenococcus oeni (strain ATCC BAA-331 / PSU-1)</name>
    <dbReference type="NCBI Taxonomy" id="203123"/>
    <lineage>
        <taxon>Bacteria</taxon>
        <taxon>Bacillati</taxon>
        <taxon>Bacillota</taxon>
        <taxon>Bacilli</taxon>
        <taxon>Lactobacillales</taxon>
        <taxon>Lactobacillaceae</taxon>
        <taxon>Oenococcus</taxon>
    </lineage>
</organism>
<name>RS9_OENOB</name>
<reference key="1">
    <citation type="journal article" date="2006" name="Proc. Natl. Acad. Sci. U.S.A.">
        <title>Comparative genomics of the lactic acid bacteria.</title>
        <authorList>
            <person name="Makarova K.S."/>
            <person name="Slesarev A."/>
            <person name="Wolf Y.I."/>
            <person name="Sorokin A."/>
            <person name="Mirkin B."/>
            <person name="Koonin E.V."/>
            <person name="Pavlov A."/>
            <person name="Pavlova N."/>
            <person name="Karamychev V."/>
            <person name="Polouchine N."/>
            <person name="Shakhova V."/>
            <person name="Grigoriev I."/>
            <person name="Lou Y."/>
            <person name="Rohksar D."/>
            <person name="Lucas S."/>
            <person name="Huang K."/>
            <person name="Goodstein D.M."/>
            <person name="Hawkins T."/>
            <person name="Plengvidhya V."/>
            <person name="Welker D."/>
            <person name="Hughes J."/>
            <person name="Goh Y."/>
            <person name="Benson A."/>
            <person name="Baldwin K."/>
            <person name="Lee J.-H."/>
            <person name="Diaz-Muniz I."/>
            <person name="Dosti B."/>
            <person name="Smeianov V."/>
            <person name="Wechter W."/>
            <person name="Barabote R."/>
            <person name="Lorca G."/>
            <person name="Altermann E."/>
            <person name="Barrangou R."/>
            <person name="Ganesan B."/>
            <person name="Xie Y."/>
            <person name="Rawsthorne H."/>
            <person name="Tamir D."/>
            <person name="Parker C."/>
            <person name="Breidt F."/>
            <person name="Broadbent J.R."/>
            <person name="Hutkins R."/>
            <person name="O'Sullivan D."/>
            <person name="Steele J."/>
            <person name="Unlu G."/>
            <person name="Saier M.H. Jr."/>
            <person name="Klaenhammer T."/>
            <person name="Richardson P."/>
            <person name="Kozyavkin S."/>
            <person name="Weimer B.C."/>
            <person name="Mills D.A."/>
        </authorList>
    </citation>
    <scope>NUCLEOTIDE SEQUENCE [LARGE SCALE GENOMIC DNA]</scope>
    <source>
        <strain>ATCC BAA-331 / PSU-1</strain>
    </source>
</reference>
<accession>Q04G51</accession>
<dbReference type="EMBL" id="CP000411">
    <property type="protein sequence ID" value="ABJ56571.1"/>
    <property type="molecule type" value="Genomic_DNA"/>
</dbReference>
<dbReference type="RefSeq" id="WP_002818490.1">
    <property type="nucleotide sequence ID" value="NC_008528.1"/>
</dbReference>
<dbReference type="SMR" id="Q04G51"/>
<dbReference type="STRING" id="203123.OEOE_0629"/>
<dbReference type="GeneID" id="75065450"/>
<dbReference type="KEGG" id="ooe:OEOE_0629"/>
<dbReference type="eggNOG" id="COG0103">
    <property type="taxonomic scope" value="Bacteria"/>
</dbReference>
<dbReference type="HOGENOM" id="CLU_046483_2_1_9"/>
<dbReference type="Proteomes" id="UP000000774">
    <property type="component" value="Chromosome"/>
</dbReference>
<dbReference type="GO" id="GO:0022627">
    <property type="term" value="C:cytosolic small ribosomal subunit"/>
    <property type="evidence" value="ECO:0007669"/>
    <property type="project" value="TreeGrafter"/>
</dbReference>
<dbReference type="GO" id="GO:0003723">
    <property type="term" value="F:RNA binding"/>
    <property type="evidence" value="ECO:0007669"/>
    <property type="project" value="TreeGrafter"/>
</dbReference>
<dbReference type="GO" id="GO:0003735">
    <property type="term" value="F:structural constituent of ribosome"/>
    <property type="evidence" value="ECO:0007669"/>
    <property type="project" value="InterPro"/>
</dbReference>
<dbReference type="GO" id="GO:0006412">
    <property type="term" value="P:translation"/>
    <property type="evidence" value="ECO:0007669"/>
    <property type="project" value="UniProtKB-UniRule"/>
</dbReference>
<dbReference type="FunFam" id="3.30.230.10:FF:000001">
    <property type="entry name" value="30S ribosomal protein S9"/>
    <property type="match status" value="1"/>
</dbReference>
<dbReference type="Gene3D" id="3.30.230.10">
    <property type="match status" value="1"/>
</dbReference>
<dbReference type="HAMAP" id="MF_00532_B">
    <property type="entry name" value="Ribosomal_uS9_B"/>
    <property type="match status" value="1"/>
</dbReference>
<dbReference type="InterPro" id="IPR020568">
    <property type="entry name" value="Ribosomal_Su5_D2-typ_SF"/>
</dbReference>
<dbReference type="InterPro" id="IPR000754">
    <property type="entry name" value="Ribosomal_uS9"/>
</dbReference>
<dbReference type="InterPro" id="IPR023035">
    <property type="entry name" value="Ribosomal_uS9_bac/plastid"/>
</dbReference>
<dbReference type="InterPro" id="IPR020574">
    <property type="entry name" value="Ribosomal_uS9_CS"/>
</dbReference>
<dbReference type="InterPro" id="IPR014721">
    <property type="entry name" value="Ribsml_uS5_D2-typ_fold_subgr"/>
</dbReference>
<dbReference type="NCBIfam" id="NF001099">
    <property type="entry name" value="PRK00132.1"/>
    <property type="match status" value="1"/>
</dbReference>
<dbReference type="PANTHER" id="PTHR21569">
    <property type="entry name" value="RIBOSOMAL PROTEIN S9"/>
    <property type="match status" value="1"/>
</dbReference>
<dbReference type="PANTHER" id="PTHR21569:SF1">
    <property type="entry name" value="SMALL RIBOSOMAL SUBUNIT PROTEIN US9M"/>
    <property type="match status" value="1"/>
</dbReference>
<dbReference type="Pfam" id="PF00380">
    <property type="entry name" value="Ribosomal_S9"/>
    <property type="match status" value="1"/>
</dbReference>
<dbReference type="SUPFAM" id="SSF54211">
    <property type="entry name" value="Ribosomal protein S5 domain 2-like"/>
    <property type="match status" value="1"/>
</dbReference>
<dbReference type="PROSITE" id="PS00360">
    <property type="entry name" value="RIBOSOMAL_S9"/>
    <property type="match status" value="1"/>
</dbReference>